<reference key="1">
    <citation type="journal article" date="2006" name="J. Bacteriol.">
        <title>Pathogenomic sequence analysis of Bacillus cereus and Bacillus thuringiensis isolates closely related to Bacillus anthracis.</title>
        <authorList>
            <person name="Han C.S."/>
            <person name="Xie G."/>
            <person name="Challacombe J.F."/>
            <person name="Altherr M.R."/>
            <person name="Bhotika S.S."/>
            <person name="Bruce D."/>
            <person name="Campbell C.S."/>
            <person name="Campbell M.L."/>
            <person name="Chen J."/>
            <person name="Chertkov O."/>
            <person name="Cleland C."/>
            <person name="Dimitrijevic M."/>
            <person name="Doggett N.A."/>
            <person name="Fawcett J.J."/>
            <person name="Glavina T."/>
            <person name="Goodwin L.A."/>
            <person name="Hill K.K."/>
            <person name="Hitchcock P."/>
            <person name="Jackson P.J."/>
            <person name="Keim P."/>
            <person name="Kewalramani A.R."/>
            <person name="Longmire J."/>
            <person name="Lucas S."/>
            <person name="Malfatti S."/>
            <person name="McMurry K."/>
            <person name="Meincke L.J."/>
            <person name="Misra M."/>
            <person name="Moseman B.L."/>
            <person name="Mundt M."/>
            <person name="Munk A.C."/>
            <person name="Okinaka R.T."/>
            <person name="Parson-Quintana B."/>
            <person name="Reilly L.P."/>
            <person name="Richardson P."/>
            <person name="Robinson D.L."/>
            <person name="Rubin E."/>
            <person name="Saunders E."/>
            <person name="Tapia R."/>
            <person name="Tesmer J.G."/>
            <person name="Thayer N."/>
            <person name="Thompson L.S."/>
            <person name="Tice H."/>
            <person name="Ticknor L.O."/>
            <person name="Wills P.L."/>
            <person name="Brettin T.S."/>
            <person name="Gilna P."/>
        </authorList>
    </citation>
    <scope>NUCLEOTIDE SEQUENCE [LARGE SCALE GENOMIC DNA]</scope>
    <source>
        <strain>ZK / E33L</strain>
    </source>
</reference>
<proteinExistence type="inferred from homology"/>
<comment type="function">
    <text evidence="1">Part of the phosphoribosylformylglycinamidine synthase complex involved in the purines biosynthetic pathway. Catalyzes the ATP-dependent conversion of formylglycinamide ribonucleotide (FGAR) and glutamine to yield formylglycinamidine ribonucleotide (FGAM) and glutamate. The FGAM synthase complex is composed of three subunits. PurQ produces an ammonia molecule by converting glutamine to glutamate. PurL transfers the ammonia molecule to FGAR to form FGAM in an ATP-dependent manner. PurS interacts with PurQ and PurL and is thought to assist in the transfer of the ammonia molecule from PurQ to PurL.</text>
</comment>
<comment type="catalytic activity">
    <reaction evidence="1">
        <text>N(2)-formyl-N(1)-(5-phospho-beta-D-ribosyl)glycinamide + L-glutamine + ATP + H2O = 2-formamido-N(1)-(5-O-phospho-beta-D-ribosyl)acetamidine + L-glutamate + ADP + phosphate + H(+)</text>
        <dbReference type="Rhea" id="RHEA:17129"/>
        <dbReference type="ChEBI" id="CHEBI:15377"/>
        <dbReference type="ChEBI" id="CHEBI:15378"/>
        <dbReference type="ChEBI" id="CHEBI:29985"/>
        <dbReference type="ChEBI" id="CHEBI:30616"/>
        <dbReference type="ChEBI" id="CHEBI:43474"/>
        <dbReference type="ChEBI" id="CHEBI:58359"/>
        <dbReference type="ChEBI" id="CHEBI:147286"/>
        <dbReference type="ChEBI" id="CHEBI:147287"/>
        <dbReference type="ChEBI" id="CHEBI:456216"/>
        <dbReference type="EC" id="6.3.5.3"/>
    </reaction>
</comment>
<comment type="pathway">
    <text evidence="1">Purine metabolism; IMP biosynthesis via de novo pathway; 5-amino-1-(5-phospho-D-ribosyl)imidazole from N(2)-formyl-N(1)-(5-phospho-D-ribosyl)glycinamide: step 1/2.</text>
</comment>
<comment type="subunit">
    <text evidence="1">Monomer. Part of the FGAM synthase complex composed of 1 PurL, 1 PurQ and 2 PurS subunits.</text>
</comment>
<comment type="subcellular location">
    <subcellularLocation>
        <location evidence="1">Cytoplasm</location>
    </subcellularLocation>
</comment>
<comment type="similarity">
    <text evidence="1">Belongs to the FGAMS family.</text>
</comment>
<protein>
    <recommendedName>
        <fullName evidence="1">Phosphoribosylformylglycinamidine synthase subunit PurL</fullName>
        <shortName evidence="1">FGAM synthase</shortName>
        <ecNumber evidence="1">6.3.5.3</ecNumber>
    </recommendedName>
    <alternativeName>
        <fullName evidence="1">Formylglycinamide ribonucleotide amidotransferase subunit II</fullName>
        <shortName evidence="1">FGAR amidotransferase II</shortName>
        <shortName evidence="1">FGAR-AT II</shortName>
    </alternativeName>
    <alternativeName>
        <fullName evidence="1">Glutamine amidotransferase PurL</fullName>
    </alternativeName>
    <alternativeName>
        <fullName evidence="1">Phosphoribosylformylglycinamidine synthase subunit II</fullName>
    </alternativeName>
</protein>
<dbReference type="EC" id="6.3.5.3" evidence="1"/>
<dbReference type="EMBL" id="CP000001">
    <property type="protein sequence ID" value="AAU19971.1"/>
    <property type="molecule type" value="Genomic_DNA"/>
</dbReference>
<dbReference type="RefSeq" id="WP_000055575.1">
    <property type="nucleotide sequence ID" value="NC_006274.1"/>
</dbReference>
<dbReference type="SMR" id="Q63GT3"/>
<dbReference type="KEGG" id="bcz:BCE33L0269"/>
<dbReference type="PATRIC" id="fig|288681.22.peg.5341"/>
<dbReference type="UniPathway" id="UPA00074">
    <property type="reaction ID" value="UER00128"/>
</dbReference>
<dbReference type="Proteomes" id="UP000002612">
    <property type="component" value="Chromosome"/>
</dbReference>
<dbReference type="GO" id="GO:0005737">
    <property type="term" value="C:cytoplasm"/>
    <property type="evidence" value="ECO:0007669"/>
    <property type="project" value="UniProtKB-SubCell"/>
</dbReference>
<dbReference type="GO" id="GO:0005524">
    <property type="term" value="F:ATP binding"/>
    <property type="evidence" value="ECO:0007669"/>
    <property type="project" value="UniProtKB-UniRule"/>
</dbReference>
<dbReference type="GO" id="GO:0000287">
    <property type="term" value="F:magnesium ion binding"/>
    <property type="evidence" value="ECO:0007669"/>
    <property type="project" value="UniProtKB-UniRule"/>
</dbReference>
<dbReference type="GO" id="GO:0004642">
    <property type="term" value="F:phosphoribosylformylglycinamidine synthase activity"/>
    <property type="evidence" value="ECO:0007669"/>
    <property type="project" value="UniProtKB-UniRule"/>
</dbReference>
<dbReference type="GO" id="GO:0006189">
    <property type="term" value="P:'de novo' IMP biosynthetic process"/>
    <property type="evidence" value="ECO:0007669"/>
    <property type="project" value="UniProtKB-UniRule"/>
</dbReference>
<dbReference type="CDD" id="cd02203">
    <property type="entry name" value="PurL_repeat1"/>
    <property type="match status" value="1"/>
</dbReference>
<dbReference type="CDD" id="cd02204">
    <property type="entry name" value="PurL_repeat2"/>
    <property type="match status" value="1"/>
</dbReference>
<dbReference type="FunFam" id="3.30.1330.10:FF:000004">
    <property type="entry name" value="Phosphoribosylformylglycinamidine synthase subunit PurL"/>
    <property type="match status" value="1"/>
</dbReference>
<dbReference type="FunFam" id="3.30.1330.10:FF:000011">
    <property type="entry name" value="Phosphoribosylformylglycinamidine synthase subunit PurL"/>
    <property type="match status" value="1"/>
</dbReference>
<dbReference type="FunFam" id="3.90.650.10:FF:000009">
    <property type="entry name" value="Phosphoribosylformylglycinamidine synthase subunit PurL"/>
    <property type="match status" value="1"/>
</dbReference>
<dbReference type="FunFam" id="3.90.650.10:FF:000013">
    <property type="entry name" value="Phosphoribosylformylglycinamidine synthase subunit PurL"/>
    <property type="match status" value="1"/>
</dbReference>
<dbReference type="Gene3D" id="3.90.650.10">
    <property type="entry name" value="PurM-like C-terminal domain"/>
    <property type="match status" value="2"/>
</dbReference>
<dbReference type="Gene3D" id="3.30.1330.10">
    <property type="entry name" value="PurM-like, N-terminal domain"/>
    <property type="match status" value="2"/>
</dbReference>
<dbReference type="HAMAP" id="MF_00420">
    <property type="entry name" value="PurL_2"/>
    <property type="match status" value="1"/>
</dbReference>
<dbReference type="InterPro" id="IPR010074">
    <property type="entry name" value="PRibForGlyAmidine_synth_PurL"/>
</dbReference>
<dbReference type="InterPro" id="IPR041609">
    <property type="entry name" value="PurL_linker"/>
</dbReference>
<dbReference type="InterPro" id="IPR010918">
    <property type="entry name" value="PurM-like_C_dom"/>
</dbReference>
<dbReference type="InterPro" id="IPR036676">
    <property type="entry name" value="PurM-like_C_sf"/>
</dbReference>
<dbReference type="InterPro" id="IPR016188">
    <property type="entry name" value="PurM-like_N"/>
</dbReference>
<dbReference type="InterPro" id="IPR036921">
    <property type="entry name" value="PurM-like_N_sf"/>
</dbReference>
<dbReference type="NCBIfam" id="TIGR01736">
    <property type="entry name" value="FGAM_synth_II"/>
    <property type="match status" value="1"/>
</dbReference>
<dbReference type="NCBIfam" id="NF002290">
    <property type="entry name" value="PRK01213.1"/>
    <property type="match status" value="1"/>
</dbReference>
<dbReference type="PANTHER" id="PTHR43555">
    <property type="entry name" value="PHOSPHORIBOSYLFORMYLGLYCINAMIDINE SYNTHASE SUBUNIT PURL"/>
    <property type="match status" value="1"/>
</dbReference>
<dbReference type="PANTHER" id="PTHR43555:SF1">
    <property type="entry name" value="PHOSPHORIBOSYLFORMYLGLYCINAMIDINE SYNTHASE SUBUNIT PURL"/>
    <property type="match status" value="1"/>
</dbReference>
<dbReference type="Pfam" id="PF00586">
    <property type="entry name" value="AIRS"/>
    <property type="match status" value="2"/>
</dbReference>
<dbReference type="Pfam" id="PF02769">
    <property type="entry name" value="AIRS_C"/>
    <property type="match status" value="2"/>
</dbReference>
<dbReference type="Pfam" id="PF18072">
    <property type="entry name" value="FGAR-AT_linker"/>
    <property type="match status" value="1"/>
</dbReference>
<dbReference type="PIRSF" id="PIRSF001587">
    <property type="entry name" value="FGAM_synthase_II"/>
    <property type="match status" value="1"/>
</dbReference>
<dbReference type="SUPFAM" id="SSF56042">
    <property type="entry name" value="PurM C-terminal domain-like"/>
    <property type="match status" value="2"/>
</dbReference>
<dbReference type="SUPFAM" id="SSF55326">
    <property type="entry name" value="PurM N-terminal domain-like"/>
    <property type="match status" value="2"/>
</dbReference>
<feature type="chain" id="PRO_0000100435" description="Phosphoribosylformylglycinamidine synthase subunit PurL">
    <location>
        <begin position="1"/>
        <end position="739"/>
    </location>
</feature>
<feature type="active site" evidence="1">
    <location>
        <position position="54"/>
    </location>
</feature>
<feature type="active site" description="Proton acceptor" evidence="1">
    <location>
        <position position="100"/>
    </location>
</feature>
<feature type="binding site" evidence="1">
    <location>
        <position position="57"/>
    </location>
    <ligand>
        <name>ATP</name>
        <dbReference type="ChEBI" id="CHEBI:30616"/>
    </ligand>
</feature>
<feature type="binding site" evidence="1">
    <location>
        <position position="96"/>
    </location>
    <ligand>
        <name>ATP</name>
        <dbReference type="ChEBI" id="CHEBI:30616"/>
    </ligand>
</feature>
<feature type="binding site" evidence="1">
    <location>
        <position position="98"/>
    </location>
    <ligand>
        <name>Mg(2+)</name>
        <dbReference type="ChEBI" id="CHEBI:18420"/>
        <label>1</label>
    </ligand>
</feature>
<feature type="binding site" evidence="1">
    <location>
        <begin position="99"/>
        <end position="102"/>
    </location>
    <ligand>
        <name>substrate</name>
    </ligand>
</feature>
<feature type="binding site" evidence="1">
    <location>
        <position position="121"/>
    </location>
    <ligand>
        <name>substrate</name>
    </ligand>
</feature>
<feature type="binding site" evidence="1">
    <location>
        <position position="122"/>
    </location>
    <ligand>
        <name>Mg(2+)</name>
        <dbReference type="ChEBI" id="CHEBI:18420"/>
        <label>2</label>
    </ligand>
</feature>
<feature type="binding site" evidence="1">
    <location>
        <position position="245"/>
    </location>
    <ligand>
        <name>substrate</name>
    </ligand>
</feature>
<feature type="binding site" evidence="1">
    <location>
        <position position="273"/>
    </location>
    <ligand>
        <name>Mg(2+)</name>
        <dbReference type="ChEBI" id="CHEBI:18420"/>
        <label>2</label>
    </ligand>
</feature>
<feature type="binding site" evidence="1">
    <location>
        <begin position="317"/>
        <end position="319"/>
    </location>
    <ligand>
        <name>substrate</name>
    </ligand>
</feature>
<feature type="binding site" evidence="1">
    <location>
        <position position="500"/>
    </location>
    <ligand>
        <name>ATP</name>
        <dbReference type="ChEBI" id="CHEBI:30616"/>
    </ligand>
</feature>
<feature type="binding site" evidence="1">
    <location>
        <position position="537"/>
    </location>
    <ligand>
        <name>ATP</name>
        <dbReference type="ChEBI" id="CHEBI:30616"/>
    </ligand>
</feature>
<feature type="binding site" evidence="1">
    <location>
        <position position="538"/>
    </location>
    <ligand>
        <name>Mg(2+)</name>
        <dbReference type="ChEBI" id="CHEBI:18420"/>
        <label>1</label>
    </ligand>
</feature>
<feature type="binding site" evidence="1">
    <location>
        <position position="540"/>
    </location>
    <ligand>
        <name>substrate</name>
    </ligand>
</feature>
<accession>Q63GT3</accession>
<gene>
    <name evidence="1" type="primary">purL</name>
    <name type="ordered locus">BCE33L0269</name>
</gene>
<organism>
    <name type="scientific">Bacillus cereus (strain ZK / E33L)</name>
    <dbReference type="NCBI Taxonomy" id="288681"/>
    <lineage>
        <taxon>Bacteria</taxon>
        <taxon>Bacillati</taxon>
        <taxon>Bacillota</taxon>
        <taxon>Bacilli</taxon>
        <taxon>Bacillales</taxon>
        <taxon>Bacillaceae</taxon>
        <taxon>Bacillus</taxon>
        <taxon>Bacillus cereus group</taxon>
    </lineage>
</organism>
<name>PURL_BACCZ</name>
<evidence type="ECO:0000255" key="1">
    <source>
        <dbReference type="HAMAP-Rule" id="MF_00420"/>
    </source>
</evidence>
<keyword id="KW-0067">ATP-binding</keyword>
<keyword id="KW-0963">Cytoplasm</keyword>
<keyword id="KW-0436">Ligase</keyword>
<keyword id="KW-0460">Magnesium</keyword>
<keyword id="KW-0479">Metal-binding</keyword>
<keyword id="KW-0547">Nucleotide-binding</keyword>
<keyword id="KW-0658">Purine biosynthesis</keyword>
<sequence length="739" mass="80191">MSLMLEPNPTQIKEERIYAEMGLTDEEFAMVEKILGRLPNYTETGLFSVMWSEHCSYKNSKPVLRKFPTTGERVLQGPGEGAGIVDIGDNQAVVFKMESHNHPSAIEPYQGAATGVGGIIRDVFSMGARPVALLNSLRFGELQSPRVKYLFEEVVAGIAGYGNCIGIPTVGGEVQFDPCYEGNPLVNAMCVGLINHEDIKKGQAHGAGNTVMYVGASTGRDGIHGATFASEELSESSEAKRPAVQVGDPFMEKLLIEACLELIQSDALVGIQDMGAAGLTSSSAEMASKAGMGIEMYLDDVPQRETGMTPYEMMLSESQERMLIVVKKGREQEIVDLFEKYGLAAVTMGKVTEDKMLRLFHKGEMVAEVPADALAEEAPIYHKPSKEAAYFAEFQQMKMETPKIENYKETLFALLQQPTIASKEWVYDQYDYQVRTSTVVTPGSDAAVVRVRGTEKGLAMTTDCNSRYIYLDPEMGGKIAVAEAARNIVCSGGEPLAITDCLNFGNPEKPEIFWQIEKSVDGMSEACRTLQTPVIGGNVSMYNERSGEAVYPTPTVGMVGLVHDLKHVTTQEFKQAGDLVYVIGETKAEFGGSELQKMLHGKIFGQSPSIDLGVELKRQKQVLAAIQAGLVQSAHDVAEGGLAVAISESAIGANGLGATVKLDGEATAALFAESQSRFVITVKRENKEVFEKAVEAIQVGEVTNTNEVTIHNEENEVLLTANVDEMRKAWKGAIPCLLK</sequence>